<proteinExistence type="inferred from homology"/>
<comment type="function">
    <text evidence="1">Found in functional membrane microdomains (FMM) that may be equivalent to eukaryotic membrane rafts. FMMs are highly dynamic and increase in number as cells age. Flotillins are thought to be important factors in membrane fluidity.</text>
</comment>
<comment type="subunit">
    <text evidence="1">Homooligomerizes.</text>
</comment>
<comment type="subcellular location">
    <subcellularLocation>
        <location evidence="1">Cell membrane</location>
        <topology evidence="1">Multi-pass membrane protein</topology>
    </subcellularLocation>
    <subcellularLocation>
        <location evidence="1">Membrane raft</location>
        <topology evidence="1">Multi-pass membrane protein</topology>
    </subcellularLocation>
</comment>
<comment type="similarity">
    <text evidence="1">Belongs to the flotillin-like FloA family.</text>
</comment>
<organism>
    <name type="scientific">Bacillus licheniformis (strain ATCC 14580 / DSM 13 / JCM 2505 / CCUG 7422 / NBRC 12200 / NCIMB 9375 / NCTC 10341 / NRRL NRS-1264 / Gibson 46)</name>
    <dbReference type="NCBI Taxonomy" id="279010"/>
    <lineage>
        <taxon>Bacteria</taxon>
        <taxon>Bacillati</taxon>
        <taxon>Bacillota</taxon>
        <taxon>Bacilli</taxon>
        <taxon>Bacillales</taxon>
        <taxon>Bacillaceae</taxon>
        <taxon>Bacillus</taxon>
    </lineage>
</organism>
<protein>
    <recommendedName>
        <fullName evidence="1">Flotillin-like protein FloA</fullName>
    </recommendedName>
</protein>
<dbReference type="EMBL" id="AE017333">
    <property type="protein sequence ID" value="AAU41600.1"/>
    <property type="molecule type" value="Genomic_DNA"/>
</dbReference>
<dbReference type="EMBL" id="CP000002">
    <property type="protein sequence ID" value="AAU24238.1"/>
    <property type="molecule type" value="Genomic_DNA"/>
</dbReference>
<dbReference type="RefSeq" id="WP_003183647.1">
    <property type="nucleotide sequence ID" value="NC_006322.1"/>
</dbReference>
<dbReference type="SMR" id="Q65H64"/>
<dbReference type="STRING" id="279010.BL01411"/>
<dbReference type="GeneID" id="92860680"/>
<dbReference type="KEGG" id="bld:BLi02729"/>
<dbReference type="KEGG" id="bli:BL01411"/>
<dbReference type="PATRIC" id="fig|279010.13.peg.2773"/>
<dbReference type="eggNOG" id="COG4864">
    <property type="taxonomic scope" value="Bacteria"/>
</dbReference>
<dbReference type="HOGENOM" id="CLU_836378_0_0_9"/>
<dbReference type="Proteomes" id="UP000000606">
    <property type="component" value="Chromosome"/>
</dbReference>
<dbReference type="Bgee" id="BL01411">
    <property type="expression patterns" value="Expressed in ovary and 12 other cell types or tissues"/>
</dbReference>
<dbReference type="GO" id="GO:0045121">
    <property type="term" value="C:membrane raft"/>
    <property type="evidence" value="ECO:0007669"/>
    <property type="project" value="UniProtKB-SubCell"/>
</dbReference>
<dbReference type="GO" id="GO:0005886">
    <property type="term" value="C:plasma membrane"/>
    <property type="evidence" value="ECO:0007669"/>
    <property type="project" value="UniProtKB-SubCell"/>
</dbReference>
<dbReference type="HAMAP" id="MF_01562">
    <property type="entry name" value="FloA"/>
    <property type="match status" value="1"/>
</dbReference>
<dbReference type="InterPro" id="IPR022853">
    <property type="entry name" value="FloA"/>
</dbReference>
<dbReference type="NCBIfam" id="NF010186">
    <property type="entry name" value="PRK13665.1"/>
    <property type="match status" value="1"/>
</dbReference>
<dbReference type="Pfam" id="PF12127">
    <property type="entry name" value="FloA"/>
    <property type="match status" value="1"/>
</dbReference>
<feature type="chain" id="PRO_0000232547" description="Flotillin-like protein FloA">
    <location>
        <begin position="1"/>
        <end position="330"/>
    </location>
</feature>
<feature type="transmembrane region" description="Helical" evidence="1">
    <location>
        <begin position="6"/>
        <end position="26"/>
    </location>
</feature>
<feature type="transmembrane region" description="Helical" evidence="1">
    <location>
        <begin position="28"/>
        <end position="48"/>
    </location>
</feature>
<reference key="1">
    <citation type="journal article" date="2004" name="J. Mol. Microbiol. Biotechnol.">
        <title>The complete genome sequence of Bacillus licheniformis DSM13, an organism with great industrial potential.</title>
        <authorList>
            <person name="Veith B."/>
            <person name="Herzberg C."/>
            <person name="Steckel S."/>
            <person name="Feesche J."/>
            <person name="Maurer K.H."/>
            <person name="Ehrenreich P."/>
            <person name="Baeumer S."/>
            <person name="Henne A."/>
            <person name="Liesegang H."/>
            <person name="Merkl R."/>
            <person name="Ehrenreich A."/>
            <person name="Gottschalk G."/>
        </authorList>
    </citation>
    <scope>NUCLEOTIDE SEQUENCE [LARGE SCALE GENOMIC DNA]</scope>
    <source>
        <strain>ATCC 14580 / DSM 13 / JCM 2505 / CCUG 7422 / NBRC 12200 / NCIMB 9375 / NCTC 10341 / NRRL NRS-1264 / Gibson 46</strain>
    </source>
</reference>
<reference key="2">
    <citation type="journal article" date="2004" name="Genome Biol.">
        <title>Complete genome sequence of the industrial bacterium Bacillus licheniformis and comparisons with closely related Bacillus species.</title>
        <authorList>
            <person name="Rey M.W."/>
            <person name="Ramaiya P."/>
            <person name="Nelson B.A."/>
            <person name="Brody-Karpin S.D."/>
            <person name="Zaretsky E.J."/>
            <person name="Tang M."/>
            <person name="Lopez de Leon A."/>
            <person name="Xiang H."/>
            <person name="Gusti V."/>
            <person name="Clausen I.G."/>
            <person name="Olsen P.B."/>
            <person name="Rasmussen M.D."/>
            <person name="Andersen J.T."/>
            <person name="Joergensen P.L."/>
            <person name="Larsen T.S."/>
            <person name="Sorokin A."/>
            <person name="Bolotin A."/>
            <person name="Lapidus A."/>
            <person name="Galleron N."/>
            <person name="Ehrlich S.D."/>
            <person name="Berka R.M."/>
        </authorList>
    </citation>
    <scope>NUCLEOTIDE SEQUENCE [LARGE SCALE GENOMIC DNA]</scope>
    <source>
        <strain>ATCC 14580 / DSM 13 / JCM 2505 / CCUG 7422 / NBRC 12200 / NCIMB 9375 / NCTC 10341 / NRRL NRS-1264 / Gibson 46</strain>
    </source>
</reference>
<keyword id="KW-1003">Cell membrane</keyword>
<keyword id="KW-0472">Membrane</keyword>
<keyword id="KW-1185">Reference proteome</keyword>
<keyword id="KW-0812">Transmembrane</keyword>
<keyword id="KW-1133">Transmembrane helix</keyword>
<accession>Q65H64</accession>
<accession>Q62SM1</accession>
<name>FLOA_BACLD</name>
<gene>
    <name evidence="1" type="primary">floA</name>
    <name type="ordered locus">BLi02729</name>
    <name type="ordered locus">BL01411</name>
</gene>
<sequence length="330" mass="35656">MDPSTLFLLLIIAAGIILLAVFFTFVPVMLWISALAAGVKISIFTLIGMRLRRVIPNRVVNPLIKAHKAGLDVAINQLESHYLAGGNVDRVVNALIAAQRANIELTFARCAAIDLAGRDVLEAVQMSVNPKVIETPFIAGVAMDGIEVKAKARITVRANIDRLVGGAGEETIIARVGEGIVSTIGSSDNHKKVLENPDMISQTVLSKGLDSGTAFEILSIDIADVDIGKNIGAILQTDQAEADKNIAQAKAEERRAMAVAQEQEMRARVEEMRAKVVEAEAEVPLAMSEALRSGKIGVMDYLNMKNIDADTDMRDSFGKMTKDQNEEDHK</sequence>
<evidence type="ECO:0000255" key="1">
    <source>
        <dbReference type="HAMAP-Rule" id="MF_01562"/>
    </source>
</evidence>